<evidence type="ECO:0000250" key="1">
    <source>
        <dbReference type="UniProtKB" id="P0A817"/>
    </source>
</evidence>
<evidence type="ECO:0000250" key="2">
    <source>
        <dbReference type="UniProtKB" id="P31153"/>
    </source>
</evidence>
<evidence type="ECO:0000305" key="3"/>
<accession>Q4R924</accession>
<gene>
    <name type="primary">MAT2A</name>
    <name type="ORF">QtsA-10874</name>
</gene>
<reference key="1">
    <citation type="submission" date="2005-06" db="EMBL/GenBank/DDBJ databases">
        <title>DNA sequences of macaque genes expressed in brain or testis and its evolutionary implications.</title>
        <authorList>
            <consortium name="International consortium for macaque cDNA sequencing and analysis"/>
        </authorList>
    </citation>
    <scope>NUCLEOTIDE SEQUENCE [LARGE SCALE MRNA]</scope>
    <source>
        <tissue>Testis</tissue>
    </source>
</reference>
<sequence length="395" mass="43661">MNGQLNGFHEAFIEEGTFLFTSESVGEGHPDKICDQISDAVLDAHLQQDPDAKVACETVAKTGMILLAGEITSRAAVDYQKVVREAVKHIGYDDSSKGFDYKTCNVLVALEQQSPDIAQGVHLDRNEEDIGAGDQGLMFGYATDETEECMPLTIVLAHKLNAKLAELRRNGTLPWLRPDSKTQVTVQYMQDRGAVLPIRVHTIVISVQHDEEVCLDEMRDALKEKVIKAVVPAKYLDEDTIYHLQPSGRFVIGGPQGDAGLTGRKIIVDTYGGWGAHGGGAFSGKDYTKVDRSAAYAARWVAKSLVKGGLCRRVLVQVSYAIGVSHPLSISIFHYGTSQKSERELLEIVKKNFDLRPGVIVRDLDLKKPIYQRTAAYGHFGRDSFPWEVPKKLKY</sequence>
<name>METK2_MACFA</name>
<organism>
    <name type="scientific">Macaca fascicularis</name>
    <name type="common">Crab-eating macaque</name>
    <name type="synonym">Cynomolgus monkey</name>
    <dbReference type="NCBI Taxonomy" id="9541"/>
    <lineage>
        <taxon>Eukaryota</taxon>
        <taxon>Metazoa</taxon>
        <taxon>Chordata</taxon>
        <taxon>Craniata</taxon>
        <taxon>Vertebrata</taxon>
        <taxon>Euteleostomi</taxon>
        <taxon>Mammalia</taxon>
        <taxon>Eutheria</taxon>
        <taxon>Euarchontoglires</taxon>
        <taxon>Primates</taxon>
        <taxon>Haplorrhini</taxon>
        <taxon>Catarrhini</taxon>
        <taxon>Cercopithecidae</taxon>
        <taxon>Cercopithecinae</taxon>
        <taxon>Macaca</taxon>
    </lineage>
</organism>
<keyword id="KW-0007">Acetylation</keyword>
<keyword id="KW-0067">ATP-binding</keyword>
<keyword id="KW-1017">Isopeptide bond</keyword>
<keyword id="KW-0460">Magnesium</keyword>
<keyword id="KW-0479">Metal-binding</keyword>
<keyword id="KW-0547">Nucleotide-binding</keyword>
<keyword id="KW-0554">One-carbon metabolism</keyword>
<keyword id="KW-0597">Phosphoprotein</keyword>
<keyword id="KW-0630">Potassium</keyword>
<keyword id="KW-1185">Reference proteome</keyword>
<keyword id="KW-0808">Transferase</keyword>
<keyword id="KW-0832">Ubl conjugation</keyword>
<feature type="chain" id="PRO_0000174436" description="S-adenosylmethionine synthase isoform type-2">
    <location>
        <begin position="1"/>
        <end position="395"/>
    </location>
</feature>
<feature type="region of interest" description="Flexible loop" evidence="1">
    <location>
        <begin position="113"/>
        <end position="125"/>
    </location>
</feature>
<feature type="binding site" description="in other chain" evidence="2">
    <location>
        <position position="29"/>
    </location>
    <ligand>
        <name>ATP</name>
        <dbReference type="ChEBI" id="CHEBI:30616"/>
        <note>ligand shared between two neighboring subunits</note>
    </ligand>
</feature>
<feature type="binding site" evidence="2">
    <location>
        <position position="31"/>
    </location>
    <ligand>
        <name>Mg(2+)</name>
        <dbReference type="ChEBI" id="CHEBI:18420"/>
    </ligand>
</feature>
<feature type="binding site" evidence="1">
    <location>
        <position position="57"/>
    </location>
    <ligand>
        <name>K(+)</name>
        <dbReference type="ChEBI" id="CHEBI:29103"/>
    </ligand>
</feature>
<feature type="binding site" description="in other chain" evidence="2">
    <location>
        <position position="70"/>
    </location>
    <ligand>
        <name>L-methionine</name>
        <dbReference type="ChEBI" id="CHEBI:57844"/>
        <note>ligand shared between two neighboring subunits</note>
    </ligand>
</feature>
<feature type="binding site" description="in other chain" evidence="2">
    <location>
        <position position="113"/>
    </location>
    <ligand>
        <name>L-methionine</name>
        <dbReference type="ChEBI" id="CHEBI:57844"/>
        <note>ligand shared between two neighboring subunits</note>
    </ligand>
</feature>
<feature type="binding site" description="in other chain" evidence="2">
    <location>
        <begin position="179"/>
        <end position="181"/>
    </location>
    <ligand>
        <name>ATP</name>
        <dbReference type="ChEBI" id="CHEBI:30616"/>
        <note>ligand shared between two neighboring subunits</note>
    </ligand>
</feature>
<feature type="binding site" description="in other chain" evidence="2">
    <location>
        <begin position="247"/>
        <end position="250"/>
    </location>
    <ligand>
        <name>ATP</name>
        <dbReference type="ChEBI" id="CHEBI:30616"/>
        <note>ligand shared between two neighboring subunits</note>
    </ligand>
</feature>
<feature type="binding site" description="in other chain" evidence="2">
    <location>
        <position position="258"/>
    </location>
    <ligand>
        <name>ATP</name>
        <dbReference type="ChEBI" id="CHEBI:30616"/>
        <note>ligand shared between two neighboring subunits</note>
    </ligand>
</feature>
<feature type="binding site" evidence="2">
    <location>
        <position position="258"/>
    </location>
    <ligand>
        <name>L-methionine</name>
        <dbReference type="ChEBI" id="CHEBI:57844"/>
        <note>ligand shared between two neighboring subunits</note>
    </ligand>
</feature>
<feature type="binding site" description="in other chain" evidence="2">
    <location>
        <begin position="264"/>
        <end position="265"/>
    </location>
    <ligand>
        <name>ATP</name>
        <dbReference type="ChEBI" id="CHEBI:30616"/>
        <note>ligand shared between two neighboring subunits</note>
    </ligand>
</feature>
<feature type="binding site" evidence="2">
    <location>
        <position position="281"/>
    </location>
    <ligand>
        <name>ATP</name>
        <dbReference type="ChEBI" id="CHEBI:30616"/>
        <note>ligand shared between two neighboring subunits</note>
    </ligand>
</feature>
<feature type="binding site" evidence="2">
    <location>
        <position position="285"/>
    </location>
    <ligand>
        <name>ATP</name>
        <dbReference type="ChEBI" id="CHEBI:30616"/>
        <note>ligand shared between two neighboring subunits</note>
    </ligand>
</feature>
<feature type="binding site" description="in other chain" evidence="1">
    <location>
        <position position="289"/>
    </location>
    <ligand>
        <name>L-methionine</name>
        <dbReference type="ChEBI" id="CHEBI:57844"/>
        <note>ligand shared between two neighboring subunits</note>
    </ligand>
</feature>
<feature type="binding site" evidence="2">
    <location>
        <position position="291"/>
    </location>
    <ligand>
        <name>ATP</name>
        <dbReference type="ChEBI" id="CHEBI:30616"/>
        <note>ligand shared between two neighboring subunits</note>
    </ligand>
</feature>
<feature type="modified residue" description="N6-acetyllysine" evidence="2">
    <location>
        <position position="81"/>
    </location>
</feature>
<feature type="modified residue" description="Phosphoserine" evidence="2">
    <location>
        <position position="114"/>
    </location>
</feature>
<feature type="modified residue" description="Phosphoserine" evidence="2">
    <location>
        <position position="384"/>
    </location>
</feature>
<feature type="cross-link" description="Glycyl lysine isopeptide (Lys-Gly) (interchain with G-Cter in SUMO2)" evidence="2">
    <location>
        <position position="228"/>
    </location>
</feature>
<feature type="cross-link" description="Glycyl lysine isopeptide (Lys-Gly) (interchain with G-Cter in SUMO2)" evidence="2">
    <location>
        <position position="234"/>
    </location>
</feature>
<proteinExistence type="evidence at transcript level"/>
<dbReference type="EC" id="2.5.1.6" evidence="2"/>
<dbReference type="EMBL" id="AB168273">
    <property type="protein sequence ID" value="BAE00397.1"/>
    <property type="molecule type" value="mRNA"/>
</dbReference>
<dbReference type="RefSeq" id="XP_005575478.1">
    <property type="nucleotide sequence ID" value="XM_005575421.4"/>
</dbReference>
<dbReference type="SMR" id="Q4R924"/>
<dbReference type="STRING" id="9541.ENSMFAP00000004688"/>
<dbReference type="Ensembl" id="ENSMFAT00000023354.2">
    <property type="protein sequence ID" value="ENSMFAP00000004688.1"/>
    <property type="gene ID" value="ENSMFAG00000002027.2"/>
</dbReference>
<dbReference type="GeneID" id="101865874"/>
<dbReference type="KEGG" id="mcf:101865874"/>
<dbReference type="CTD" id="4144"/>
<dbReference type="VEuPathDB" id="HostDB:ENSMFAG00000002027"/>
<dbReference type="eggNOG" id="KOG1506">
    <property type="taxonomic scope" value="Eukaryota"/>
</dbReference>
<dbReference type="GeneTree" id="ENSGT00950000183185"/>
<dbReference type="OMA" id="ASYMARY"/>
<dbReference type="OrthoDB" id="3620at314294"/>
<dbReference type="UniPathway" id="UPA00315">
    <property type="reaction ID" value="UER00080"/>
</dbReference>
<dbReference type="Proteomes" id="UP000233100">
    <property type="component" value="Chromosome 13"/>
</dbReference>
<dbReference type="Bgee" id="ENSMFAG00000002027">
    <property type="expression patterns" value="Expressed in bone marrow and 13 other cell types or tissues"/>
</dbReference>
<dbReference type="GO" id="GO:0048269">
    <property type="term" value="C:methionine adenosyltransferase complex"/>
    <property type="evidence" value="ECO:0000250"/>
    <property type="project" value="UniProtKB"/>
</dbReference>
<dbReference type="GO" id="GO:0005524">
    <property type="term" value="F:ATP binding"/>
    <property type="evidence" value="ECO:0007669"/>
    <property type="project" value="UniProtKB-KW"/>
</dbReference>
<dbReference type="GO" id="GO:0046872">
    <property type="term" value="F:metal ion binding"/>
    <property type="evidence" value="ECO:0007669"/>
    <property type="project" value="UniProtKB-KW"/>
</dbReference>
<dbReference type="GO" id="GO:0004478">
    <property type="term" value="F:methionine adenosyltransferase activity"/>
    <property type="evidence" value="ECO:0000250"/>
    <property type="project" value="UniProtKB"/>
</dbReference>
<dbReference type="GO" id="GO:0006730">
    <property type="term" value="P:one-carbon metabolic process"/>
    <property type="evidence" value="ECO:0007669"/>
    <property type="project" value="UniProtKB-KW"/>
</dbReference>
<dbReference type="GO" id="GO:0051291">
    <property type="term" value="P:protein heterooligomerization"/>
    <property type="evidence" value="ECO:0000250"/>
    <property type="project" value="UniProtKB"/>
</dbReference>
<dbReference type="GO" id="GO:0034214">
    <property type="term" value="P:protein hexamerization"/>
    <property type="evidence" value="ECO:0000250"/>
    <property type="project" value="UniProtKB"/>
</dbReference>
<dbReference type="GO" id="GO:0006556">
    <property type="term" value="P:S-adenosylmethionine biosynthetic process"/>
    <property type="evidence" value="ECO:0000250"/>
    <property type="project" value="UniProtKB"/>
</dbReference>
<dbReference type="CDD" id="cd18079">
    <property type="entry name" value="S-AdoMet_synt"/>
    <property type="match status" value="1"/>
</dbReference>
<dbReference type="FunFam" id="3.30.300.10:FF:000001">
    <property type="entry name" value="S-adenosylmethionine synthase"/>
    <property type="match status" value="1"/>
</dbReference>
<dbReference type="FunFam" id="3.30.300.10:FF:000003">
    <property type="entry name" value="S-adenosylmethionine synthase"/>
    <property type="match status" value="1"/>
</dbReference>
<dbReference type="FunFam" id="3.30.300.10:FF:000004">
    <property type="entry name" value="S-adenosylmethionine synthase"/>
    <property type="match status" value="1"/>
</dbReference>
<dbReference type="Gene3D" id="3.30.300.10">
    <property type="match status" value="3"/>
</dbReference>
<dbReference type="HAMAP" id="MF_00086">
    <property type="entry name" value="S_AdoMet_synth1"/>
    <property type="match status" value="1"/>
</dbReference>
<dbReference type="InterPro" id="IPR022631">
    <property type="entry name" value="ADOMET_SYNTHASE_CS"/>
</dbReference>
<dbReference type="InterPro" id="IPR022630">
    <property type="entry name" value="S-AdoMet_synt_C"/>
</dbReference>
<dbReference type="InterPro" id="IPR022629">
    <property type="entry name" value="S-AdoMet_synt_central"/>
</dbReference>
<dbReference type="InterPro" id="IPR022628">
    <property type="entry name" value="S-AdoMet_synt_N"/>
</dbReference>
<dbReference type="InterPro" id="IPR002133">
    <property type="entry name" value="S-AdoMet_synthetase"/>
</dbReference>
<dbReference type="InterPro" id="IPR022636">
    <property type="entry name" value="S-AdoMet_synthetase_sfam"/>
</dbReference>
<dbReference type="NCBIfam" id="TIGR01034">
    <property type="entry name" value="metK"/>
    <property type="match status" value="1"/>
</dbReference>
<dbReference type="PANTHER" id="PTHR11964">
    <property type="entry name" value="S-ADENOSYLMETHIONINE SYNTHETASE"/>
    <property type="match status" value="1"/>
</dbReference>
<dbReference type="Pfam" id="PF02773">
    <property type="entry name" value="S-AdoMet_synt_C"/>
    <property type="match status" value="1"/>
</dbReference>
<dbReference type="Pfam" id="PF02772">
    <property type="entry name" value="S-AdoMet_synt_M"/>
    <property type="match status" value="1"/>
</dbReference>
<dbReference type="Pfam" id="PF00438">
    <property type="entry name" value="S-AdoMet_synt_N"/>
    <property type="match status" value="1"/>
</dbReference>
<dbReference type="PIRSF" id="PIRSF000497">
    <property type="entry name" value="MAT"/>
    <property type="match status" value="1"/>
</dbReference>
<dbReference type="SUPFAM" id="SSF55973">
    <property type="entry name" value="S-adenosylmethionine synthetase"/>
    <property type="match status" value="3"/>
</dbReference>
<dbReference type="PROSITE" id="PS00376">
    <property type="entry name" value="ADOMET_SYNTHASE_1"/>
    <property type="match status" value="1"/>
</dbReference>
<dbReference type="PROSITE" id="PS00377">
    <property type="entry name" value="ADOMET_SYNTHASE_2"/>
    <property type="match status" value="1"/>
</dbReference>
<protein>
    <recommendedName>
        <fullName>S-adenosylmethionine synthase isoform type-2</fullName>
        <shortName>AdoMet synthase 2</shortName>
        <ecNumber evidence="2">2.5.1.6</ecNumber>
    </recommendedName>
    <alternativeName>
        <fullName>Methionine adenosyltransferase 2</fullName>
        <shortName>MAT 2</shortName>
    </alternativeName>
</protein>
<comment type="function">
    <text evidence="2">Catalyzes the formation of S-adenosylmethionine from methionine and ATP. The reaction comprises two steps that are both catalyzed by the same enzyme: formation of S-adenosylmethionine (AdoMet) and triphosphate, and subsequent hydrolysis of the triphosphate.</text>
</comment>
<comment type="catalytic activity">
    <reaction evidence="2">
        <text>L-methionine + ATP + H2O = S-adenosyl-L-methionine + phosphate + diphosphate</text>
        <dbReference type="Rhea" id="RHEA:21080"/>
        <dbReference type="ChEBI" id="CHEBI:15377"/>
        <dbReference type="ChEBI" id="CHEBI:30616"/>
        <dbReference type="ChEBI" id="CHEBI:33019"/>
        <dbReference type="ChEBI" id="CHEBI:43474"/>
        <dbReference type="ChEBI" id="CHEBI:57844"/>
        <dbReference type="ChEBI" id="CHEBI:59789"/>
        <dbReference type="EC" id="2.5.1.6"/>
    </reaction>
</comment>
<comment type="cofactor">
    <cofactor evidence="1">
        <name>Mg(2+)</name>
        <dbReference type="ChEBI" id="CHEBI:18420"/>
    </cofactor>
    <text evidence="2">Binds 2 magnesium ions per subunit. The magnesium ions interact primarily with the substrate.</text>
</comment>
<comment type="cofactor">
    <cofactor evidence="1">
        <name>K(+)</name>
        <dbReference type="ChEBI" id="CHEBI:29103"/>
    </cofactor>
    <text evidence="2">Binds 1 potassium ion per subunit. The potassium ion interacts primarily with the substrate.</text>
</comment>
<comment type="pathway">
    <text evidence="2">Amino-acid biosynthesis; S-adenosyl-L-methionine biosynthesis; S-adenosyl-L-methionine from L-methionine: step 1/1.</text>
</comment>
<comment type="subunit">
    <text evidence="2">Heterotrimer; composed of a catalytic MAT2A homodimer that binds one regulatory MAT2B chain. Heterohexamer; composed of a central, catalytic MAT2A homotetramer flanked on either side by a regulatory MAT2B chain.</text>
</comment>
<comment type="similarity">
    <text evidence="3">Belongs to the AdoMet synthase family.</text>
</comment>